<reference key="1">
    <citation type="submission" date="2004-03" db="EMBL/GenBank/DDBJ databases">
        <title>Synthesis of compatible solute ectoine in Virgibacillus pantothenticus is induced by high osmolality and growth in the cold.</title>
        <authorList>
            <person name="Kuhlmann A.U."/>
            <person name="Gimpel S."/>
            <person name="Hoffmann T."/>
            <person name="Bremer E."/>
        </authorList>
    </citation>
    <scope>NUCLEOTIDE SEQUENCE [GENOMIC DNA]</scope>
</reference>
<sequence length="416" mass="45890">MQIFEELESAVRSYSRGWPTIFEKAKGYKLWDIDGNMYIDFFAGAGALNYGHNHDTMQEKLIAYIQDDHIIHSLDMGTTPRKTFLETFHNTILKPRNLDYKIMFPGPTGTNTVESALKIARKVTGRDTVISFTNAFHGMTIGSLSVTGNSFKRHGAGVPLHHSVSMPYDKYVNDQDSIAYLERFLEDSGSGVALPAAIILETVQGEGGINAASIEWLQKIASICERWDILLIIDDVQAGCGRTGTFFSFEPAGIAPDIVCLSKSIGGIGLPMAITLIKPEYDQWGPGEHNGTFRGNNLAFIAATEALTAFWQDNTFSKSIIQKSKLVRQRIDRIIDKFPSLQGEARGRGLMQGIVIPEPNCASEICKAAFDIGLIVETSGPNDEVVKFLPPLIIDKEGINQGFDILEVSMEHVLKK</sequence>
<keyword id="KW-0032">Aminotransferase</keyword>
<keyword id="KW-0663">Pyridoxal phosphate</keyword>
<keyword id="KW-0808">Transferase</keyword>
<gene>
    <name type="primary">ectB</name>
</gene>
<dbReference type="EC" id="2.6.1.76"/>
<dbReference type="EMBL" id="AY585263">
    <property type="protein sequence ID" value="AAS93807.1"/>
    <property type="molecule type" value="Genomic_DNA"/>
</dbReference>
<dbReference type="RefSeq" id="WP_128743562.1">
    <property type="nucleotide sequence ID" value="NZ_CP073011.1"/>
</dbReference>
<dbReference type="SMR" id="Q6PR32"/>
<dbReference type="GeneID" id="66870975"/>
<dbReference type="OrthoDB" id="9807885at2"/>
<dbReference type="UniPathway" id="UPA00067">
    <property type="reaction ID" value="UER00121"/>
</dbReference>
<dbReference type="GO" id="GO:0045303">
    <property type="term" value="F:diaminobutyrate-2-oxoglutarate transaminase activity"/>
    <property type="evidence" value="ECO:0007669"/>
    <property type="project" value="UniProtKB-EC"/>
</dbReference>
<dbReference type="GO" id="GO:0047307">
    <property type="term" value="F:diaminobutyrate-pyruvate transaminase activity"/>
    <property type="evidence" value="ECO:0007669"/>
    <property type="project" value="InterPro"/>
</dbReference>
<dbReference type="GO" id="GO:0030170">
    <property type="term" value="F:pyridoxal phosphate binding"/>
    <property type="evidence" value="ECO:0007669"/>
    <property type="project" value="InterPro"/>
</dbReference>
<dbReference type="GO" id="GO:0019491">
    <property type="term" value="P:ectoine biosynthetic process"/>
    <property type="evidence" value="ECO:0007669"/>
    <property type="project" value="UniProtKB-UniPathway"/>
</dbReference>
<dbReference type="CDD" id="cd00610">
    <property type="entry name" value="OAT_like"/>
    <property type="match status" value="1"/>
</dbReference>
<dbReference type="Gene3D" id="3.90.1150.10">
    <property type="entry name" value="Aspartate Aminotransferase, domain 1"/>
    <property type="match status" value="1"/>
</dbReference>
<dbReference type="Gene3D" id="3.40.640.10">
    <property type="entry name" value="Type I PLP-dependent aspartate aminotransferase-like (Major domain)"/>
    <property type="match status" value="1"/>
</dbReference>
<dbReference type="InterPro" id="IPR005814">
    <property type="entry name" value="Aminotrans_3"/>
</dbReference>
<dbReference type="InterPro" id="IPR049704">
    <property type="entry name" value="Aminotrans_3_PPA_site"/>
</dbReference>
<dbReference type="InterPro" id="IPR004637">
    <property type="entry name" value="Dat"/>
</dbReference>
<dbReference type="InterPro" id="IPR012773">
    <property type="entry name" value="Ectoine_EctB"/>
</dbReference>
<dbReference type="InterPro" id="IPR015424">
    <property type="entry name" value="PyrdxlP-dep_Trfase"/>
</dbReference>
<dbReference type="InterPro" id="IPR015421">
    <property type="entry name" value="PyrdxlP-dep_Trfase_major"/>
</dbReference>
<dbReference type="InterPro" id="IPR015422">
    <property type="entry name" value="PyrdxlP-dep_Trfase_small"/>
</dbReference>
<dbReference type="NCBIfam" id="TIGR00709">
    <property type="entry name" value="dat"/>
    <property type="match status" value="1"/>
</dbReference>
<dbReference type="NCBIfam" id="TIGR02407">
    <property type="entry name" value="ectoine_ectB"/>
    <property type="match status" value="1"/>
</dbReference>
<dbReference type="NCBIfam" id="NF006733">
    <property type="entry name" value="PRK09264.1"/>
    <property type="match status" value="1"/>
</dbReference>
<dbReference type="PANTHER" id="PTHR43552">
    <property type="entry name" value="DIAMINOBUTYRATE--2-OXOGLUTARATE AMINOTRANSFERASE"/>
    <property type="match status" value="1"/>
</dbReference>
<dbReference type="PANTHER" id="PTHR43552:SF2">
    <property type="entry name" value="DIAMINOBUTYRATE--2-OXOGLUTARATE TRANSAMINASE"/>
    <property type="match status" value="1"/>
</dbReference>
<dbReference type="Pfam" id="PF00202">
    <property type="entry name" value="Aminotran_3"/>
    <property type="match status" value="1"/>
</dbReference>
<dbReference type="PIRSF" id="PIRSF000521">
    <property type="entry name" value="Transaminase_4ab_Lys_Orn"/>
    <property type="match status" value="1"/>
</dbReference>
<dbReference type="SUPFAM" id="SSF53383">
    <property type="entry name" value="PLP-dependent transferases"/>
    <property type="match status" value="1"/>
</dbReference>
<dbReference type="PROSITE" id="PS00600">
    <property type="entry name" value="AA_TRANSFER_CLASS_3"/>
    <property type="match status" value="1"/>
</dbReference>
<feature type="chain" id="PRO_0000120532" description="Diaminobutyrate--2-oxoglutarate transaminase">
    <location>
        <begin position="1"/>
        <end position="416"/>
    </location>
</feature>
<feature type="modified residue" description="N6-(pyridoxal phosphate)lysine" evidence="2">
    <location>
        <position position="263"/>
    </location>
</feature>
<name>ECTB_VIRPA</name>
<organism>
    <name type="scientific">Virgibacillus pantothenticus</name>
    <dbReference type="NCBI Taxonomy" id="1473"/>
    <lineage>
        <taxon>Bacteria</taxon>
        <taxon>Bacillati</taxon>
        <taxon>Bacillota</taxon>
        <taxon>Bacilli</taxon>
        <taxon>Bacillales</taxon>
        <taxon>Bacillaceae</taxon>
        <taxon>Virgibacillus</taxon>
    </lineage>
</organism>
<accession>Q6PR32</accession>
<comment type="function">
    <text evidence="1">Catalyzes reversively the conversion of L-aspartate beta-semialdehyde (ASA) to L-2,4-diaminobutyrate (DABA) by transamination with L-glutamate.</text>
</comment>
<comment type="catalytic activity">
    <reaction>
        <text>L-2,4-diaminobutanoate + 2-oxoglutarate = L-aspartate 4-semialdehyde + L-glutamate</text>
        <dbReference type="Rhea" id="RHEA:11160"/>
        <dbReference type="ChEBI" id="CHEBI:16810"/>
        <dbReference type="ChEBI" id="CHEBI:29985"/>
        <dbReference type="ChEBI" id="CHEBI:58761"/>
        <dbReference type="ChEBI" id="CHEBI:537519"/>
        <dbReference type="EC" id="2.6.1.76"/>
    </reaction>
</comment>
<comment type="cofactor">
    <cofactor evidence="1">
        <name>pyridoxal 5'-phosphate</name>
        <dbReference type="ChEBI" id="CHEBI:597326"/>
    </cofactor>
</comment>
<comment type="pathway">
    <text>Amine and polyamine biosynthesis; ectoine biosynthesis; L-ectoine from L-aspartate 4-semialdehyde: step 1/3.</text>
</comment>
<comment type="similarity">
    <text evidence="3">Belongs to the class-III pyridoxal-phosphate-dependent aminotransferase family.</text>
</comment>
<proteinExistence type="inferred from homology"/>
<evidence type="ECO:0000250" key="1"/>
<evidence type="ECO:0000255" key="2"/>
<evidence type="ECO:0000305" key="3"/>
<protein>
    <recommendedName>
        <fullName>Diaminobutyrate--2-oxoglutarate transaminase</fullName>
        <ecNumber>2.6.1.76</ecNumber>
    </recommendedName>
    <alternativeName>
        <fullName>DABA aminotransferase</fullName>
    </alternativeName>
    <alternativeName>
        <fullName>Diaminobutyrate--2-oxoglutarate aminotransferase</fullName>
    </alternativeName>
    <alternativeName>
        <fullName>L-2,4-diaminobutyric acid transaminase</fullName>
    </alternativeName>
</protein>